<protein>
    <recommendedName>
        <fullName>Putative dolichyldiphosphatase</fullName>
        <ecNumber>3.6.1.43</ecNumber>
    </recommendedName>
    <alternativeName>
        <fullName>Dolichyl pyrophosphate phosphatase</fullName>
    </alternativeName>
</protein>
<gene>
    <name type="ORF">17E5.220</name>
    <name type="ORF">NCU03718</name>
</gene>
<proteinExistence type="inferred from homology"/>
<accession>Q9C2M6</accession>
<comment type="catalytic activity">
    <reaction>
        <text>a di-trans,poly-cis-dolichyl diphosphate + H2O = a di-trans,poly-cis-dolichyl phosphate + phosphate + H(+)</text>
        <dbReference type="Rhea" id="RHEA:14385"/>
        <dbReference type="Rhea" id="RHEA-COMP:19498"/>
        <dbReference type="Rhea" id="RHEA-COMP:19506"/>
        <dbReference type="ChEBI" id="CHEBI:15377"/>
        <dbReference type="ChEBI" id="CHEBI:15378"/>
        <dbReference type="ChEBI" id="CHEBI:43474"/>
        <dbReference type="ChEBI" id="CHEBI:57497"/>
        <dbReference type="ChEBI" id="CHEBI:57683"/>
        <dbReference type="EC" id="3.6.1.43"/>
    </reaction>
</comment>
<comment type="pathway">
    <text>Protein modification; protein glycosylation.</text>
</comment>
<comment type="subcellular location">
    <subcellularLocation>
        <location evidence="1">Endoplasmic reticulum membrane</location>
        <topology evidence="1">Multi-pass membrane protein</topology>
    </subcellularLocation>
</comment>
<comment type="similarity">
    <text evidence="4">Belongs to the dolichyldiphosphatase family.</text>
</comment>
<organism>
    <name type="scientific">Neurospora crassa (strain ATCC 24698 / 74-OR23-1A / CBS 708.71 / DSM 1257 / FGSC 987)</name>
    <dbReference type="NCBI Taxonomy" id="367110"/>
    <lineage>
        <taxon>Eukaryota</taxon>
        <taxon>Fungi</taxon>
        <taxon>Dikarya</taxon>
        <taxon>Ascomycota</taxon>
        <taxon>Pezizomycotina</taxon>
        <taxon>Sordariomycetes</taxon>
        <taxon>Sordariomycetidae</taxon>
        <taxon>Sordariales</taxon>
        <taxon>Sordariaceae</taxon>
        <taxon>Neurospora</taxon>
    </lineage>
</organism>
<name>DOPP_NEUCR</name>
<evidence type="ECO:0000250" key="1"/>
<evidence type="ECO:0000255" key="2"/>
<evidence type="ECO:0000256" key="3">
    <source>
        <dbReference type="SAM" id="MobiDB-lite"/>
    </source>
</evidence>
<evidence type="ECO:0000305" key="4"/>
<sequence length="282" mass="31635">MADNVTPLASLSLTHVYYNPDDPISLLCAWLALVPQALCVVYATLIWSTREAEVILMFAGQLACEAANFALKRLIKEERPARIHSTGGKGYGMPSSHAQFVSFWAVALGLFLLARHTPREQQQQQQQKQKQRERKKQVTNVKTTTTNGSGNGSLFKTLTDSATDLERYAHEPWSFAHRFVASLGALVLAGAVAWSRTYLGYHTEKQVLVGCGAGTLCAVAWFVVTHVVRQSGLLGQILDFPVVRWFRVRDLVVEEDLPQAGWEKWEEQRVARREVEERKKAL</sequence>
<reference key="1">
    <citation type="journal article" date="2003" name="Nucleic Acids Res.">
        <title>What's in the genome of a filamentous fungus? Analysis of the Neurospora genome sequence.</title>
        <authorList>
            <person name="Mannhaupt G."/>
            <person name="Montrone C."/>
            <person name="Haase D."/>
            <person name="Mewes H.-W."/>
            <person name="Aign V."/>
            <person name="Hoheisel J.D."/>
            <person name="Fartmann B."/>
            <person name="Nyakatura G."/>
            <person name="Kempken F."/>
            <person name="Maier J."/>
            <person name="Schulte U."/>
        </authorList>
    </citation>
    <scope>NUCLEOTIDE SEQUENCE [LARGE SCALE GENOMIC DNA]</scope>
    <source>
        <strain>ATCC 24698 / 74-OR23-1A / CBS 708.71 / DSM 1257 / FGSC 987</strain>
    </source>
</reference>
<reference key="2">
    <citation type="journal article" date="2003" name="Nature">
        <title>The genome sequence of the filamentous fungus Neurospora crassa.</title>
        <authorList>
            <person name="Galagan J.E."/>
            <person name="Calvo S.E."/>
            <person name="Borkovich K.A."/>
            <person name="Selker E.U."/>
            <person name="Read N.D."/>
            <person name="Jaffe D.B."/>
            <person name="FitzHugh W."/>
            <person name="Ma L.-J."/>
            <person name="Smirnov S."/>
            <person name="Purcell S."/>
            <person name="Rehman B."/>
            <person name="Elkins T."/>
            <person name="Engels R."/>
            <person name="Wang S."/>
            <person name="Nielsen C.B."/>
            <person name="Butler J."/>
            <person name="Endrizzi M."/>
            <person name="Qui D."/>
            <person name="Ianakiev P."/>
            <person name="Bell-Pedersen D."/>
            <person name="Nelson M.A."/>
            <person name="Werner-Washburne M."/>
            <person name="Selitrennikoff C.P."/>
            <person name="Kinsey J.A."/>
            <person name="Braun E.L."/>
            <person name="Zelter A."/>
            <person name="Schulte U."/>
            <person name="Kothe G.O."/>
            <person name="Jedd G."/>
            <person name="Mewes H.-W."/>
            <person name="Staben C."/>
            <person name="Marcotte E."/>
            <person name="Greenberg D."/>
            <person name="Roy A."/>
            <person name="Foley K."/>
            <person name="Naylor J."/>
            <person name="Stange-Thomann N."/>
            <person name="Barrett R."/>
            <person name="Gnerre S."/>
            <person name="Kamal M."/>
            <person name="Kamvysselis M."/>
            <person name="Mauceli E.W."/>
            <person name="Bielke C."/>
            <person name="Rudd S."/>
            <person name="Frishman D."/>
            <person name="Krystofova S."/>
            <person name="Rasmussen C."/>
            <person name="Metzenberg R.L."/>
            <person name="Perkins D.D."/>
            <person name="Kroken S."/>
            <person name="Cogoni C."/>
            <person name="Macino G."/>
            <person name="Catcheside D.E.A."/>
            <person name="Li W."/>
            <person name="Pratt R.J."/>
            <person name="Osmani S.A."/>
            <person name="DeSouza C.P.C."/>
            <person name="Glass N.L."/>
            <person name="Orbach M.J."/>
            <person name="Berglund J.A."/>
            <person name="Voelker R."/>
            <person name="Yarden O."/>
            <person name="Plamann M."/>
            <person name="Seiler S."/>
            <person name="Dunlap J.C."/>
            <person name="Radford A."/>
            <person name="Aramayo R."/>
            <person name="Natvig D.O."/>
            <person name="Alex L.A."/>
            <person name="Mannhaupt G."/>
            <person name="Ebbole D.J."/>
            <person name="Freitag M."/>
            <person name="Paulsen I."/>
            <person name="Sachs M.S."/>
            <person name="Lander E.S."/>
            <person name="Nusbaum C."/>
            <person name="Birren B.W."/>
        </authorList>
    </citation>
    <scope>NUCLEOTIDE SEQUENCE [LARGE SCALE GENOMIC DNA]</scope>
    <source>
        <strain>ATCC 24698 / 74-OR23-1A / CBS 708.71 / DSM 1257 / FGSC 987</strain>
    </source>
</reference>
<dbReference type="EC" id="3.6.1.43"/>
<dbReference type="EMBL" id="AL513467">
    <property type="protein sequence ID" value="CAC28848.1"/>
    <property type="molecule type" value="Genomic_DNA"/>
</dbReference>
<dbReference type="EMBL" id="CM002240">
    <property type="protein sequence ID" value="EAA32258.1"/>
    <property type="molecule type" value="Genomic_DNA"/>
</dbReference>
<dbReference type="RefSeq" id="XP_961494.1">
    <property type="nucleotide sequence ID" value="XM_956401.2"/>
</dbReference>
<dbReference type="SMR" id="Q9C2M6"/>
<dbReference type="FunCoup" id="Q9C2M6">
    <property type="interactions" value="343"/>
</dbReference>
<dbReference type="STRING" id="367110.Q9C2M6"/>
<dbReference type="PaxDb" id="5141-EFNCRP00000003484"/>
<dbReference type="EnsemblFungi" id="EAA32258">
    <property type="protein sequence ID" value="EAA32258"/>
    <property type="gene ID" value="NCU03718"/>
</dbReference>
<dbReference type="GeneID" id="3877658"/>
<dbReference type="KEGG" id="ncr:NCU03718"/>
<dbReference type="VEuPathDB" id="FungiDB:NCU03718"/>
<dbReference type="HOGENOM" id="CLU_074922_0_0_1"/>
<dbReference type="InParanoid" id="Q9C2M6"/>
<dbReference type="OMA" id="VYATLIW"/>
<dbReference type="OrthoDB" id="302705at2759"/>
<dbReference type="UniPathway" id="UPA00378"/>
<dbReference type="Proteomes" id="UP000001805">
    <property type="component" value="Chromosome 2, Linkage Group V"/>
</dbReference>
<dbReference type="GO" id="GO:0005789">
    <property type="term" value="C:endoplasmic reticulum membrane"/>
    <property type="evidence" value="ECO:0000318"/>
    <property type="project" value="GO_Central"/>
</dbReference>
<dbReference type="GO" id="GO:0047874">
    <property type="term" value="F:dolichyldiphosphatase activity"/>
    <property type="evidence" value="ECO:0000318"/>
    <property type="project" value="GO_Central"/>
</dbReference>
<dbReference type="GO" id="GO:0006487">
    <property type="term" value="P:protein N-linked glycosylation"/>
    <property type="evidence" value="ECO:0000318"/>
    <property type="project" value="GO_Central"/>
</dbReference>
<dbReference type="CDD" id="cd03382">
    <property type="entry name" value="PAP2_dolichyldiphosphatase"/>
    <property type="match status" value="1"/>
</dbReference>
<dbReference type="Gene3D" id="1.20.144.10">
    <property type="entry name" value="Phosphatidic acid phosphatase type 2/haloperoxidase"/>
    <property type="match status" value="1"/>
</dbReference>
<dbReference type="InterPro" id="IPR039667">
    <property type="entry name" value="Dolichyldiphosphatase_PAP2"/>
</dbReference>
<dbReference type="InterPro" id="IPR036938">
    <property type="entry name" value="P_Acid_Pase_2/haloperoxi_sf"/>
</dbReference>
<dbReference type="InterPro" id="IPR000326">
    <property type="entry name" value="P_Acid_Pase_2/haloperoxidase"/>
</dbReference>
<dbReference type="PANTHER" id="PTHR11247:SF1">
    <property type="entry name" value="DOLICHYLDIPHOSPHATASE 1"/>
    <property type="match status" value="1"/>
</dbReference>
<dbReference type="PANTHER" id="PTHR11247">
    <property type="entry name" value="PALMITOYL-PROTEIN THIOESTERASE/DOLICHYLDIPHOSPHATASE 1"/>
    <property type="match status" value="1"/>
</dbReference>
<dbReference type="Pfam" id="PF01569">
    <property type="entry name" value="PAP2"/>
    <property type="match status" value="1"/>
</dbReference>
<dbReference type="SMART" id="SM00014">
    <property type="entry name" value="acidPPc"/>
    <property type="match status" value="1"/>
</dbReference>
<dbReference type="SUPFAM" id="SSF48317">
    <property type="entry name" value="Acid phosphatase/Vanadium-dependent haloperoxidase"/>
    <property type="match status" value="1"/>
</dbReference>
<feature type="chain" id="PRO_0000215628" description="Putative dolichyldiphosphatase">
    <location>
        <begin position="1"/>
        <end position="282"/>
    </location>
</feature>
<feature type="transmembrane region" description="Helical" evidence="2">
    <location>
        <begin position="26"/>
        <end position="46"/>
    </location>
</feature>
<feature type="transmembrane region" description="Helical" evidence="2">
    <location>
        <begin position="93"/>
        <end position="113"/>
    </location>
</feature>
<feature type="transmembrane region" description="Helical" evidence="2">
    <location>
        <begin position="173"/>
        <end position="193"/>
    </location>
</feature>
<feature type="transmembrane region" description="Helical" evidence="2">
    <location>
        <begin position="207"/>
        <end position="227"/>
    </location>
</feature>
<feature type="region of interest" description="Disordered" evidence="3">
    <location>
        <begin position="121"/>
        <end position="153"/>
    </location>
</feature>
<feature type="compositionally biased region" description="Low complexity" evidence="3">
    <location>
        <begin position="138"/>
        <end position="148"/>
    </location>
</feature>
<keyword id="KW-0256">Endoplasmic reticulum</keyword>
<keyword id="KW-0378">Hydrolase</keyword>
<keyword id="KW-0472">Membrane</keyword>
<keyword id="KW-1185">Reference proteome</keyword>
<keyword id="KW-0812">Transmembrane</keyword>
<keyword id="KW-1133">Transmembrane helix</keyword>